<comment type="function">
    <text evidence="1">Specifically methylates position 2 of adenine 2503 in 23S rRNA and position 2 of adenine 37 in tRNAs. m2A2503 modification seems to play a crucial role in the proofreading step occurring at the peptidyl transferase center and thus would serve to optimize ribosomal fidelity.</text>
</comment>
<comment type="catalytic activity">
    <reaction evidence="1">
        <text>adenosine(2503) in 23S rRNA + 2 reduced [2Fe-2S]-[ferredoxin] + 2 S-adenosyl-L-methionine = 2-methyladenosine(2503) in 23S rRNA + 5'-deoxyadenosine + L-methionine + 2 oxidized [2Fe-2S]-[ferredoxin] + S-adenosyl-L-homocysteine</text>
        <dbReference type="Rhea" id="RHEA:42916"/>
        <dbReference type="Rhea" id="RHEA-COMP:10000"/>
        <dbReference type="Rhea" id="RHEA-COMP:10001"/>
        <dbReference type="Rhea" id="RHEA-COMP:10152"/>
        <dbReference type="Rhea" id="RHEA-COMP:10282"/>
        <dbReference type="ChEBI" id="CHEBI:17319"/>
        <dbReference type="ChEBI" id="CHEBI:33737"/>
        <dbReference type="ChEBI" id="CHEBI:33738"/>
        <dbReference type="ChEBI" id="CHEBI:57844"/>
        <dbReference type="ChEBI" id="CHEBI:57856"/>
        <dbReference type="ChEBI" id="CHEBI:59789"/>
        <dbReference type="ChEBI" id="CHEBI:74411"/>
        <dbReference type="ChEBI" id="CHEBI:74497"/>
        <dbReference type="EC" id="2.1.1.192"/>
    </reaction>
</comment>
<comment type="catalytic activity">
    <reaction evidence="1">
        <text>adenosine(37) in tRNA + 2 reduced [2Fe-2S]-[ferredoxin] + 2 S-adenosyl-L-methionine = 2-methyladenosine(37) in tRNA + 5'-deoxyadenosine + L-methionine + 2 oxidized [2Fe-2S]-[ferredoxin] + S-adenosyl-L-homocysteine</text>
        <dbReference type="Rhea" id="RHEA:43332"/>
        <dbReference type="Rhea" id="RHEA-COMP:10000"/>
        <dbReference type="Rhea" id="RHEA-COMP:10001"/>
        <dbReference type="Rhea" id="RHEA-COMP:10162"/>
        <dbReference type="Rhea" id="RHEA-COMP:10485"/>
        <dbReference type="ChEBI" id="CHEBI:17319"/>
        <dbReference type="ChEBI" id="CHEBI:33737"/>
        <dbReference type="ChEBI" id="CHEBI:33738"/>
        <dbReference type="ChEBI" id="CHEBI:57844"/>
        <dbReference type="ChEBI" id="CHEBI:57856"/>
        <dbReference type="ChEBI" id="CHEBI:59789"/>
        <dbReference type="ChEBI" id="CHEBI:74411"/>
        <dbReference type="ChEBI" id="CHEBI:74497"/>
        <dbReference type="EC" id="2.1.1.192"/>
    </reaction>
</comment>
<comment type="cofactor">
    <cofactor evidence="1">
        <name>[4Fe-4S] cluster</name>
        <dbReference type="ChEBI" id="CHEBI:49883"/>
    </cofactor>
    <text evidence="1">Binds 1 [4Fe-4S] cluster. The cluster is coordinated with 3 cysteines and an exchangeable S-adenosyl-L-methionine.</text>
</comment>
<comment type="subcellular location">
    <subcellularLocation>
        <location evidence="1">Cytoplasm</location>
    </subcellularLocation>
</comment>
<comment type="miscellaneous">
    <text evidence="1">Reaction proceeds by a ping-pong mechanism involving intermediate methylation of a conserved cysteine residue.</text>
</comment>
<comment type="similarity">
    <text evidence="1">Belongs to the radical SAM superfamily. RlmN family.</text>
</comment>
<sequence>MNGFAVIPSVTTTTTSGEPIASDVARKQNLLELDREGLERFFEDVLGEKRYRAHQVMKWIHHRYVADFEQMTDVGKALRTRLQACAEVRVPRVVFDKHSADGTHKWLLAMGTDRKNAIETVYIPDKGRGTLCVSSQIGCGLNCTFCSTATQGFNRNLTTAEIIGQVWVAARHLGNVPHQRRRLTNVVMMGMGEPLMNFDNVVRAMSVMRDDLGYGLSNKRVTLSTSGLVPMIDRLSTESDVSLAVSLHAPNDKLREQLVPLNKKYPIVELMASCERYLSVNRKRDSVTFEYTLMKGVNDKQEHAHELAKLMRQFDCAMQVKGAAKVNLIPFNPFPGTCYERSTEVDIRAFQKILLDAQILAMVRRTRGDDIDAACGQLKGQVVDRTRRQAEFRRTIEDRVGRDVAA</sequence>
<accession>B0U494</accession>
<proteinExistence type="inferred from homology"/>
<dbReference type="EC" id="2.1.1.192" evidence="1"/>
<dbReference type="EMBL" id="CP000941">
    <property type="protein sequence ID" value="ACA12673.1"/>
    <property type="molecule type" value="Genomic_DNA"/>
</dbReference>
<dbReference type="RefSeq" id="WP_004083577.1">
    <property type="nucleotide sequence ID" value="NC_010513.1"/>
</dbReference>
<dbReference type="SMR" id="B0U494"/>
<dbReference type="KEGG" id="xfm:Xfasm12_1780"/>
<dbReference type="HOGENOM" id="CLU_029101_0_0_6"/>
<dbReference type="GO" id="GO:0005737">
    <property type="term" value="C:cytoplasm"/>
    <property type="evidence" value="ECO:0007669"/>
    <property type="project" value="UniProtKB-SubCell"/>
</dbReference>
<dbReference type="GO" id="GO:0051539">
    <property type="term" value="F:4 iron, 4 sulfur cluster binding"/>
    <property type="evidence" value="ECO:0007669"/>
    <property type="project" value="UniProtKB-UniRule"/>
</dbReference>
<dbReference type="GO" id="GO:0046872">
    <property type="term" value="F:metal ion binding"/>
    <property type="evidence" value="ECO:0007669"/>
    <property type="project" value="UniProtKB-KW"/>
</dbReference>
<dbReference type="GO" id="GO:0070040">
    <property type="term" value="F:rRNA (adenine(2503)-C2-)-methyltransferase activity"/>
    <property type="evidence" value="ECO:0007669"/>
    <property type="project" value="UniProtKB-UniRule"/>
</dbReference>
<dbReference type="GO" id="GO:0019843">
    <property type="term" value="F:rRNA binding"/>
    <property type="evidence" value="ECO:0007669"/>
    <property type="project" value="UniProtKB-UniRule"/>
</dbReference>
<dbReference type="GO" id="GO:0002935">
    <property type="term" value="F:tRNA (adenine(37)-C2)-methyltransferase activity"/>
    <property type="evidence" value="ECO:0007669"/>
    <property type="project" value="UniProtKB-UniRule"/>
</dbReference>
<dbReference type="GO" id="GO:0000049">
    <property type="term" value="F:tRNA binding"/>
    <property type="evidence" value="ECO:0007669"/>
    <property type="project" value="UniProtKB-UniRule"/>
</dbReference>
<dbReference type="GO" id="GO:0070475">
    <property type="term" value="P:rRNA base methylation"/>
    <property type="evidence" value="ECO:0007669"/>
    <property type="project" value="UniProtKB-UniRule"/>
</dbReference>
<dbReference type="GO" id="GO:0030488">
    <property type="term" value="P:tRNA methylation"/>
    <property type="evidence" value="ECO:0007669"/>
    <property type="project" value="UniProtKB-UniRule"/>
</dbReference>
<dbReference type="CDD" id="cd01335">
    <property type="entry name" value="Radical_SAM"/>
    <property type="match status" value="1"/>
</dbReference>
<dbReference type="FunFam" id="1.10.150.530:FF:000003">
    <property type="entry name" value="Dual-specificity RNA methyltransferase RlmN"/>
    <property type="match status" value="1"/>
</dbReference>
<dbReference type="FunFam" id="3.20.20.70:FF:000008">
    <property type="entry name" value="Dual-specificity RNA methyltransferase RlmN"/>
    <property type="match status" value="1"/>
</dbReference>
<dbReference type="Gene3D" id="1.10.150.530">
    <property type="match status" value="1"/>
</dbReference>
<dbReference type="Gene3D" id="3.20.20.70">
    <property type="entry name" value="Aldolase class I"/>
    <property type="match status" value="1"/>
</dbReference>
<dbReference type="HAMAP" id="MF_01849">
    <property type="entry name" value="RNA_methyltr_RlmN"/>
    <property type="match status" value="1"/>
</dbReference>
<dbReference type="InterPro" id="IPR013785">
    <property type="entry name" value="Aldolase_TIM"/>
</dbReference>
<dbReference type="InterPro" id="IPR040072">
    <property type="entry name" value="Methyltransferase_A"/>
</dbReference>
<dbReference type="InterPro" id="IPR048641">
    <property type="entry name" value="RlmN_N"/>
</dbReference>
<dbReference type="InterPro" id="IPR027492">
    <property type="entry name" value="RNA_MTrfase_RlmN"/>
</dbReference>
<dbReference type="InterPro" id="IPR004383">
    <property type="entry name" value="rRNA_lsu_MTrfase_RlmN/Cfr"/>
</dbReference>
<dbReference type="InterPro" id="IPR007197">
    <property type="entry name" value="rSAM"/>
</dbReference>
<dbReference type="NCBIfam" id="TIGR00048">
    <property type="entry name" value="rRNA_mod_RlmN"/>
    <property type="match status" value="1"/>
</dbReference>
<dbReference type="PANTHER" id="PTHR30544">
    <property type="entry name" value="23S RRNA METHYLTRANSFERASE"/>
    <property type="match status" value="1"/>
</dbReference>
<dbReference type="PANTHER" id="PTHR30544:SF5">
    <property type="entry name" value="RADICAL SAM CORE DOMAIN-CONTAINING PROTEIN"/>
    <property type="match status" value="1"/>
</dbReference>
<dbReference type="Pfam" id="PF04055">
    <property type="entry name" value="Radical_SAM"/>
    <property type="match status" value="1"/>
</dbReference>
<dbReference type="Pfam" id="PF21016">
    <property type="entry name" value="RlmN_N"/>
    <property type="match status" value="1"/>
</dbReference>
<dbReference type="PIRSF" id="PIRSF006004">
    <property type="entry name" value="CHP00048"/>
    <property type="match status" value="1"/>
</dbReference>
<dbReference type="SFLD" id="SFLDF00275">
    <property type="entry name" value="adenosine_C2_methyltransferase"/>
    <property type="match status" value="1"/>
</dbReference>
<dbReference type="SFLD" id="SFLDG01062">
    <property type="entry name" value="methyltransferase_(Class_A)"/>
    <property type="match status" value="1"/>
</dbReference>
<dbReference type="SUPFAM" id="SSF102114">
    <property type="entry name" value="Radical SAM enzymes"/>
    <property type="match status" value="1"/>
</dbReference>
<dbReference type="PROSITE" id="PS51918">
    <property type="entry name" value="RADICAL_SAM"/>
    <property type="match status" value="1"/>
</dbReference>
<name>RLMN_XYLFM</name>
<evidence type="ECO:0000255" key="1">
    <source>
        <dbReference type="HAMAP-Rule" id="MF_01849"/>
    </source>
</evidence>
<evidence type="ECO:0000255" key="2">
    <source>
        <dbReference type="PROSITE-ProRule" id="PRU01266"/>
    </source>
</evidence>
<protein>
    <recommendedName>
        <fullName evidence="1">Dual-specificity RNA methyltransferase RlmN</fullName>
        <ecNumber evidence="1">2.1.1.192</ecNumber>
    </recommendedName>
    <alternativeName>
        <fullName evidence="1">23S rRNA (adenine(2503)-C(2))-methyltransferase</fullName>
    </alternativeName>
    <alternativeName>
        <fullName evidence="1">23S rRNA m2A2503 methyltransferase</fullName>
    </alternativeName>
    <alternativeName>
        <fullName evidence="1">Ribosomal RNA large subunit methyltransferase N</fullName>
    </alternativeName>
    <alternativeName>
        <fullName evidence="1">tRNA (adenine(37)-C(2))-methyltransferase</fullName>
    </alternativeName>
    <alternativeName>
        <fullName evidence="1">tRNA m2A37 methyltransferase</fullName>
    </alternativeName>
</protein>
<reference key="1">
    <citation type="journal article" date="2010" name="J. Bacteriol.">
        <title>Whole genome sequences of two Xylella fastidiosa strains (M12 and M23) causing almond leaf scorch disease in California.</title>
        <authorList>
            <person name="Chen J."/>
            <person name="Xie G."/>
            <person name="Han S."/>
            <person name="Chertkov O."/>
            <person name="Sims D."/>
            <person name="Civerolo E.L."/>
        </authorList>
    </citation>
    <scope>NUCLEOTIDE SEQUENCE [LARGE SCALE GENOMIC DNA]</scope>
    <source>
        <strain>M12</strain>
    </source>
</reference>
<gene>
    <name evidence="1" type="primary">rlmN</name>
    <name type="ordered locus">Xfasm12_1780</name>
</gene>
<feature type="chain" id="PRO_0000350534" description="Dual-specificity RNA methyltransferase RlmN">
    <location>
        <begin position="1"/>
        <end position="406"/>
    </location>
</feature>
<feature type="domain" description="Radical SAM core" evidence="2">
    <location>
        <begin position="125"/>
        <end position="370"/>
    </location>
</feature>
<feature type="active site" description="Proton acceptor" evidence="1">
    <location>
        <position position="119"/>
    </location>
</feature>
<feature type="active site" description="S-methylcysteine intermediate" evidence="1">
    <location>
        <position position="375"/>
    </location>
</feature>
<feature type="binding site" evidence="1">
    <location>
        <position position="139"/>
    </location>
    <ligand>
        <name>[4Fe-4S] cluster</name>
        <dbReference type="ChEBI" id="CHEBI:49883"/>
        <note>4Fe-4S-S-AdoMet</note>
    </ligand>
</feature>
<feature type="binding site" evidence="1">
    <location>
        <position position="143"/>
    </location>
    <ligand>
        <name>[4Fe-4S] cluster</name>
        <dbReference type="ChEBI" id="CHEBI:49883"/>
        <note>4Fe-4S-S-AdoMet</note>
    </ligand>
</feature>
<feature type="binding site" evidence="1">
    <location>
        <position position="146"/>
    </location>
    <ligand>
        <name>[4Fe-4S] cluster</name>
        <dbReference type="ChEBI" id="CHEBI:49883"/>
        <note>4Fe-4S-S-AdoMet</note>
    </ligand>
</feature>
<feature type="binding site" evidence="1">
    <location>
        <begin position="192"/>
        <end position="193"/>
    </location>
    <ligand>
        <name>S-adenosyl-L-methionine</name>
        <dbReference type="ChEBI" id="CHEBI:59789"/>
    </ligand>
</feature>
<feature type="binding site" evidence="1">
    <location>
        <position position="224"/>
    </location>
    <ligand>
        <name>S-adenosyl-L-methionine</name>
        <dbReference type="ChEBI" id="CHEBI:59789"/>
    </ligand>
</feature>
<feature type="binding site" evidence="1">
    <location>
        <begin position="246"/>
        <end position="248"/>
    </location>
    <ligand>
        <name>S-adenosyl-L-methionine</name>
        <dbReference type="ChEBI" id="CHEBI:59789"/>
    </ligand>
</feature>
<feature type="binding site" evidence="1">
    <location>
        <position position="332"/>
    </location>
    <ligand>
        <name>S-adenosyl-L-methionine</name>
        <dbReference type="ChEBI" id="CHEBI:59789"/>
    </ligand>
</feature>
<feature type="disulfide bond" description="(transient)" evidence="1">
    <location>
        <begin position="132"/>
        <end position="375"/>
    </location>
</feature>
<keyword id="KW-0004">4Fe-4S</keyword>
<keyword id="KW-0963">Cytoplasm</keyword>
<keyword id="KW-1015">Disulfide bond</keyword>
<keyword id="KW-0408">Iron</keyword>
<keyword id="KW-0411">Iron-sulfur</keyword>
<keyword id="KW-0479">Metal-binding</keyword>
<keyword id="KW-0489">Methyltransferase</keyword>
<keyword id="KW-0698">rRNA processing</keyword>
<keyword id="KW-0949">S-adenosyl-L-methionine</keyword>
<keyword id="KW-0808">Transferase</keyword>
<keyword id="KW-0819">tRNA processing</keyword>
<organism>
    <name type="scientific">Xylella fastidiosa (strain M12)</name>
    <dbReference type="NCBI Taxonomy" id="405440"/>
    <lineage>
        <taxon>Bacteria</taxon>
        <taxon>Pseudomonadati</taxon>
        <taxon>Pseudomonadota</taxon>
        <taxon>Gammaproteobacteria</taxon>
        <taxon>Lysobacterales</taxon>
        <taxon>Lysobacteraceae</taxon>
        <taxon>Xylella</taxon>
    </lineage>
</organism>